<comment type="function">
    <text evidence="2">Blocks Kv1.6/KCNA6 potassium channels.</text>
</comment>
<comment type="subcellular location">
    <subcellularLocation>
        <location evidence="2">Secreted</location>
    </subcellularLocation>
</comment>
<comment type="tissue specificity">
    <text evidence="5">Expressed by the venom gland.</text>
</comment>
<comment type="mass spectrometry"/>
<comment type="similarity">
    <text evidence="4">Belongs to the short scorpion toxin superfamily. Potassium channel inhibitor family.</text>
</comment>
<feature type="peptide" id="PRO_0000044932" description="Tamulustoxin" evidence="2">
    <location>
        <begin position="1"/>
        <end position="35"/>
    </location>
</feature>
<feature type="disulfide bond" evidence="1">
    <location>
        <begin position="2"/>
        <end position="22"/>
    </location>
</feature>
<feature type="disulfide bond" evidence="1">
    <location>
        <begin position="7"/>
        <end position="31"/>
    </location>
</feature>
<feature type="disulfide bond" evidence="1">
    <location>
        <begin position="11"/>
        <end position="33"/>
    </location>
</feature>
<accession>Q9BN12</accession>
<evidence type="ECO:0000250" key="1"/>
<evidence type="ECO:0000269" key="2">
    <source>
    </source>
</evidence>
<evidence type="ECO:0000303" key="3">
    <source>
    </source>
</evidence>
<evidence type="ECO:0000305" key="4"/>
<evidence type="ECO:0000305" key="5">
    <source>
    </source>
</evidence>
<keyword id="KW-0903">Direct protein sequencing</keyword>
<keyword id="KW-1015">Disulfide bond</keyword>
<keyword id="KW-0872">Ion channel impairing toxin</keyword>
<keyword id="KW-0528">Neurotoxin</keyword>
<keyword id="KW-0632">Potassium channel impairing toxin</keyword>
<keyword id="KW-0964">Secreted</keyword>
<keyword id="KW-0800">Toxin</keyword>
<keyword id="KW-1220">Voltage-gated potassium channel impairing toxin</keyword>
<reference key="1">
    <citation type="journal article" date="2001" name="Arch. Biochem. Biophys.">
        <title>Tamulustoxin: a novel potassium channel blocker from the venom of the Indian red scorpion Mesobuthus tamulus.</title>
        <authorList>
            <person name="Strong P.N."/>
            <person name="Clark G.S."/>
            <person name="Armugam A."/>
            <person name="De-Allie F.A."/>
            <person name="Joseph J.S."/>
            <person name="Yemul V."/>
            <person name="Deshpande J.M."/>
            <person name="Kamat R."/>
            <person name="Gadre S.V."/>
            <person name="Gopalakrishnakone P."/>
            <person name="Kini R.M."/>
            <person name="Owen D.G."/>
            <person name="Jeyaseelan K."/>
        </authorList>
    </citation>
    <scope>NUCLEOTIDE SEQUENCE [MRNA]</scope>
    <scope>PROTEIN SEQUENCE</scope>
    <scope>FUNCTION</scope>
    <scope>MASS SPECTROMETRY</scope>
    <scope>SUBCELLULAR LOCATION</scope>
    <source>
        <tissue>Venom</tissue>
        <tissue>Venom gland</tissue>
    </source>
</reference>
<name>KAXU1_HOTTA</name>
<organism>
    <name type="scientific">Hottentotta tamulus</name>
    <name type="common">Eastern Indian scorpion</name>
    <name type="synonym">Mesobuthus tamulus</name>
    <dbReference type="NCBI Taxonomy" id="34647"/>
    <lineage>
        <taxon>Eukaryota</taxon>
        <taxon>Metazoa</taxon>
        <taxon>Ecdysozoa</taxon>
        <taxon>Arthropoda</taxon>
        <taxon>Chelicerata</taxon>
        <taxon>Arachnida</taxon>
        <taxon>Scorpiones</taxon>
        <taxon>Buthida</taxon>
        <taxon>Buthoidea</taxon>
        <taxon>Buthidae</taxon>
        <taxon>Mesobuthus</taxon>
    </lineage>
</organism>
<protein>
    <recommendedName>
        <fullName evidence="3">Tamulustoxin</fullName>
        <shortName evidence="3">TmTX</shortName>
    </recommendedName>
    <alternativeName>
        <fullName evidence="4">Potassium channel toxin alpha-KTx</fullName>
    </alternativeName>
</protein>
<proteinExistence type="evidence at protein level"/>
<sequence>RCHFVVCTTDCRRNSPGTYGECVKKEKGKECVCKS</sequence>
<dbReference type="EMBL" id="AF276224">
    <property type="protein sequence ID" value="AAK01860.1"/>
    <property type="molecule type" value="mRNA"/>
</dbReference>
<dbReference type="SMR" id="Q9BN12"/>
<dbReference type="GO" id="GO:0005576">
    <property type="term" value="C:extracellular region"/>
    <property type="evidence" value="ECO:0007669"/>
    <property type="project" value="UniProtKB-SubCell"/>
</dbReference>
<dbReference type="GO" id="GO:0019870">
    <property type="term" value="F:potassium channel inhibitor activity"/>
    <property type="evidence" value="ECO:0007669"/>
    <property type="project" value="InterPro"/>
</dbReference>
<dbReference type="GO" id="GO:0090729">
    <property type="term" value="F:toxin activity"/>
    <property type="evidence" value="ECO:0007669"/>
    <property type="project" value="UniProtKB-KW"/>
</dbReference>
<dbReference type="InterPro" id="IPR012636">
    <property type="entry name" value="Toxin_32"/>
</dbReference>
<dbReference type="Pfam" id="PF08120">
    <property type="entry name" value="Toxin_32"/>
    <property type="match status" value="1"/>
</dbReference>